<feature type="chain" id="PRO_0000057657" description="Beta-galactosidase">
    <location>
        <begin position="1"/>
        <end position="1015"/>
    </location>
</feature>
<feature type="active site" description="Proton donor" evidence="1">
    <location>
        <position position="434"/>
    </location>
</feature>
<feature type="active site" description="Nucleophile" evidence="1">
    <location>
        <position position="513"/>
    </location>
</feature>
<protein>
    <recommendedName>
        <fullName>Beta-galactosidase</fullName>
        <shortName>Beta-gal</shortName>
        <ecNumber>3.2.1.23</ecNumber>
    </recommendedName>
    <alternativeName>
        <fullName>Lactase</fullName>
    </alternativeName>
</protein>
<name>BGAL_ARTSB</name>
<gene>
    <name type="primary">lacZ</name>
</gene>
<organism>
    <name type="scientific">Arthrobacter sp. (strain B7)</name>
    <dbReference type="NCBI Taxonomy" id="86041"/>
    <lineage>
        <taxon>Bacteria</taxon>
        <taxon>Bacillati</taxon>
        <taxon>Actinomycetota</taxon>
        <taxon>Actinomycetes</taxon>
        <taxon>Micrococcales</taxon>
        <taxon>Micrococcaceae</taxon>
        <taxon>Arthrobacter</taxon>
    </lineage>
</organism>
<keyword id="KW-0903">Direct protein sequencing</keyword>
<keyword id="KW-0326">Glycosidase</keyword>
<keyword id="KW-0378">Hydrolase</keyword>
<keyword id="KW-0460">Magnesium</keyword>
<keyword id="KW-0464">Manganese</keyword>
<accession>Q59140</accession>
<reference key="1">
    <citation type="journal article" date="1994" name="Appl. Environ. Microbiol.">
        <title>Characterization of a psychrotrophic Arthrobacter gene and its cold-active beta-galactosidase.</title>
        <authorList>
            <person name="Trimbur D.E."/>
            <person name="Gutshall K.R."/>
            <person name="Prema P."/>
            <person name="Brenchley J.E."/>
        </authorList>
    </citation>
    <scope>NUCLEOTIDE SEQUENCE [GENOMIC DNA]</scope>
    <scope>PROTEIN SEQUENCE OF 1-5</scope>
    <scope>CHARACTERIZATION</scope>
</reference>
<evidence type="ECO:0000250" key="1"/>
<evidence type="ECO:0000305" key="2"/>
<dbReference type="EC" id="3.2.1.23"/>
<dbReference type="EMBL" id="U12334">
    <property type="protein sequence ID" value="AAA69907.1"/>
    <property type="molecule type" value="Genomic_DNA"/>
</dbReference>
<dbReference type="PIR" id="I39697">
    <property type="entry name" value="I39697"/>
</dbReference>
<dbReference type="SMR" id="Q59140"/>
<dbReference type="CAZy" id="GH2">
    <property type="family name" value="Glycoside Hydrolase Family 2"/>
</dbReference>
<dbReference type="GO" id="GO:0009341">
    <property type="term" value="C:beta-galactosidase complex"/>
    <property type="evidence" value="ECO:0007669"/>
    <property type="project" value="InterPro"/>
</dbReference>
<dbReference type="GO" id="GO:0004565">
    <property type="term" value="F:beta-galactosidase activity"/>
    <property type="evidence" value="ECO:0007669"/>
    <property type="project" value="UniProtKB-EC"/>
</dbReference>
<dbReference type="GO" id="GO:0030246">
    <property type="term" value="F:carbohydrate binding"/>
    <property type="evidence" value="ECO:0007669"/>
    <property type="project" value="InterPro"/>
</dbReference>
<dbReference type="GO" id="GO:0005990">
    <property type="term" value="P:lactose catabolic process"/>
    <property type="evidence" value="ECO:0007669"/>
    <property type="project" value="TreeGrafter"/>
</dbReference>
<dbReference type="Gene3D" id="2.70.98.10">
    <property type="match status" value="1"/>
</dbReference>
<dbReference type="Gene3D" id="2.60.120.260">
    <property type="entry name" value="Galactose-binding domain-like"/>
    <property type="match status" value="1"/>
</dbReference>
<dbReference type="Gene3D" id="3.20.20.80">
    <property type="entry name" value="Glycosidases"/>
    <property type="match status" value="1"/>
</dbReference>
<dbReference type="Gene3D" id="2.60.40.10">
    <property type="entry name" value="Immunoglobulins"/>
    <property type="match status" value="2"/>
</dbReference>
<dbReference type="InterPro" id="IPR004199">
    <property type="entry name" value="B-gal_small/dom_5"/>
</dbReference>
<dbReference type="InterPro" id="IPR050347">
    <property type="entry name" value="Bact_Beta-galactosidase"/>
</dbReference>
<dbReference type="InterPro" id="IPR036156">
    <property type="entry name" value="Beta-gal/glucu_dom_sf"/>
</dbReference>
<dbReference type="InterPro" id="IPR011013">
    <property type="entry name" value="Gal_mutarotase_sf_dom"/>
</dbReference>
<dbReference type="InterPro" id="IPR008979">
    <property type="entry name" value="Galactose-bd-like_sf"/>
</dbReference>
<dbReference type="InterPro" id="IPR014718">
    <property type="entry name" value="GH-type_carb-bd"/>
</dbReference>
<dbReference type="InterPro" id="IPR006101">
    <property type="entry name" value="Glyco_hydro_2"/>
</dbReference>
<dbReference type="InterPro" id="IPR023232">
    <property type="entry name" value="Glyco_hydro_2_AS"/>
</dbReference>
<dbReference type="InterPro" id="IPR006103">
    <property type="entry name" value="Glyco_hydro_2_cat"/>
</dbReference>
<dbReference type="InterPro" id="IPR023230">
    <property type="entry name" value="Glyco_hydro_2_CS"/>
</dbReference>
<dbReference type="InterPro" id="IPR006104">
    <property type="entry name" value="Glyco_hydro_2_N"/>
</dbReference>
<dbReference type="InterPro" id="IPR017853">
    <property type="entry name" value="Glycoside_hydrolase_SF"/>
</dbReference>
<dbReference type="InterPro" id="IPR013783">
    <property type="entry name" value="Ig-like_fold"/>
</dbReference>
<dbReference type="InterPro" id="IPR032312">
    <property type="entry name" value="LacZ_4"/>
</dbReference>
<dbReference type="PANTHER" id="PTHR46323">
    <property type="entry name" value="BETA-GALACTOSIDASE"/>
    <property type="match status" value="1"/>
</dbReference>
<dbReference type="PANTHER" id="PTHR46323:SF2">
    <property type="entry name" value="BETA-GALACTOSIDASE"/>
    <property type="match status" value="1"/>
</dbReference>
<dbReference type="Pfam" id="PF02929">
    <property type="entry name" value="Bgal_small_N"/>
    <property type="match status" value="1"/>
</dbReference>
<dbReference type="Pfam" id="PF02836">
    <property type="entry name" value="Glyco_hydro_2_C"/>
    <property type="match status" value="1"/>
</dbReference>
<dbReference type="Pfam" id="PF02837">
    <property type="entry name" value="Glyco_hydro_2_N"/>
    <property type="match status" value="1"/>
</dbReference>
<dbReference type="Pfam" id="PF16353">
    <property type="entry name" value="LacZ_4"/>
    <property type="match status" value="1"/>
</dbReference>
<dbReference type="PRINTS" id="PR00132">
    <property type="entry name" value="GLHYDRLASE2"/>
</dbReference>
<dbReference type="SMART" id="SM01038">
    <property type="entry name" value="Bgal_small_N"/>
    <property type="match status" value="1"/>
</dbReference>
<dbReference type="SUPFAM" id="SSF51445">
    <property type="entry name" value="(Trans)glycosidases"/>
    <property type="match status" value="1"/>
</dbReference>
<dbReference type="SUPFAM" id="SSF49303">
    <property type="entry name" value="beta-Galactosidase/glucuronidase domain"/>
    <property type="match status" value="2"/>
</dbReference>
<dbReference type="SUPFAM" id="SSF74650">
    <property type="entry name" value="Galactose mutarotase-like"/>
    <property type="match status" value="1"/>
</dbReference>
<dbReference type="SUPFAM" id="SSF49785">
    <property type="entry name" value="Galactose-binding domain-like"/>
    <property type="match status" value="1"/>
</dbReference>
<dbReference type="PROSITE" id="PS00719">
    <property type="entry name" value="GLYCOSYL_HYDROL_F2_1"/>
    <property type="match status" value="1"/>
</dbReference>
<dbReference type="PROSITE" id="PS00608">
    <property type="entry name" value="GLYCOSYL_HYDROL_F2_2"/>
    <property type="match status" value="1"/>
</dbReference>
<sequence>MSSSYITDQGPGSGLRVPARSWLNSDAPSLSLNGDWRFRLLPTAPGTPGAGSVLATGETVEAVASESFDDSSWDTLAVPSHWVLAEDGKYGRPIYTNVQYPFPIDPPFVPDANPTGDYRRTFDVPDSWFESTTAALTLRFDGVESRYKVWVNGVEIGVGSGSRLAQEFDVSEALRPGKNLLVVRVHQWSAASYLEDQDQWWLPGIFRDVKLQARPVGGLTDVWLRTDWSGSGTITPEITADPAAFPVTLRVPELGLEVIWDSPADVAPVSIDAVEPWSAEVPRLYDASVSSAAESISLRLGFRTVKIVGDQFLVNGRKVIFHGVNRHETNADRGRVFDEASAREDLALMKRFNVNAIRTSHYPPHPRFLDLADELGFWVILECDLETHGFHALKWVGNPSDDPAWRDALVDRMERTVERDKNHASIVMWSLGNESGTGANLAAMAAWTHARDLSRPVHYEGDYTGAYTDVYSRMYSSIPETDSIGRNDSHALLLGCNAIESARQRTRPFILCEYVHAMGNGPGAIDQYEDLVDKYPRLHGGFVWEWRDHGIRTRTADGTEFFAYGGDFDEVIHDGNFVMDGMILSDSTPTPGLFEYKQIVSPIRLALTLNAEGNAGLTVANLRHTSDASDVVLRWRVEHNGTRVDAGELTTDGANGPLQAGDSLTLTLPTIVAAAEGETWLSVEAVLREATAWAPAGHPLSETQLDLSPAQPPLRVPRPASPIAGAAPVELGPATFDAGSLVTLAGLPVAGPRLELWRAPTDNDKGQGFGAYGPEDPWINSGRGVPAPSSAVVWQQAGLDRLTRRVEDVAALPQGLRVRSRYAAANSEHDVAVEENWQLSGDELWLRIDIAPSAGWDLVFPRIGVRLDLPSEVDGASWFGAGPRESYPDSLHSAVVGTHGGSLEELNVNYARPQETGHHSDVRWVELSRDGAPWLRIEADPDALGRRPGFSLAKNTAQEVALAPHPHELPESQHSYLYLDAAQHGLGSRACGPDVWPDFALRPEARTLVLRIRAA</sequence>
<comment type="catalytic activity">
    <reaction>
        <text>Hydrolysis of terminal non-reducing beta-D-galactose residues in beta-D-galactosides.</text>
        <dbReference type="EC" id="3.2.1.23"/>
    </reaction>
</comment>
<comment type="cofactor">
    <cofactor>
        <name>Mg(2+)</name>
        <dbReference type="ChEBI" id="CHEBI:18420"/>
    </cofactor>
    <cofactor>
        <name>Mn(2+)</name>
        <dbReference type="ChEBI" id="CHEBI:29035"/>
    </cofactor>
</comment>
<comment type="biophysicochemical properties">
    <phDependence>
        <text>Optimum pH is 7.2.</text>
    </phDependence>
    <temperatureDependence>
        <text>Optimum temperature is 30 degrees Celsius with o-nitrophenyl-beta-D-galactopyranoside (ONPG) as substrate. Has high specific activity at low temperatures.</text>
    </temperatureDependence>
</comment>
<comment type="induction">
    <text>By growth on lactose.</text>
</comment>
<comment type="similarity">
    <text evidence="2">Belongs to the glycosyl hydrolase 2 family.</text>
</comment>
<proteinExistence type="evidence at protein level"/>